<comment type="function">
    <text evidence="1">Involved in the maturation of [NiFe] hydrogenases. Required for nickel insertion into the metal center of the hydrogenase.</text>
</comment>
<comment type="similarity">
    <text evidence="1 2">Belongs to the HypA/HybF family.</text>
</comment>
<keyword id="KW-0479">Metal-binding</keyword>
<keyword id="KW-0533">Nickel</keyword>
<keyword id="KW-1185">Reference proteome</keyword>
<keyword id="KW-0862">Zinc</keyword>
<sequence length="124" mass="14058">MHELSYANAMLEAILNSIKKEEEKGKKIKKVTEINLEVGELTFINVEQLKFAFEVIAEGTVCEGAKINVEFIKPKCKCLDCGYEGEPEILDEFEVYCPKCKSIRLKLSGGKEFNIKNATVEYED</sequence>
<feature type="chain" id="PRO_0000129077" description="Hydrogenase maturation factor HypA">
    <location>
        <begin position="1"/>
        <end position="124"/>
    </location>
</feature>
<feature type="binding site" evidence="1">
    <location>
        <position position="2"/>
    </location>
    <ligand>
        <name>Ni(2+)</name>
        <dbReference type="ChEBI" id="CHEBI:49786"/>
    </ligand>
</feature>
<feature type="binding site" evidence="1">
    <location>
        <position position="78"/>
    </location>
    <ligand>
        <name>Zn(2+)</name>
        <dbReference type="ChEBI" id="CHEBI:29105"/>
    </ligand>
</feature>
<feature type="binding site" evidence="1">
    <location>
        <position position="81"/>
    </location>
    <ligand>
        <name>Zn(2+)</name>
        <dbReference type="ChEBI" id="CHEBI:29105"/>
    </ligand>
</feature>
<feature type="binding site" evidence="1">
    <location>
        <position position="97"/>
    </location>
    <ligand>
        <name>Zn(2+)</name>
        <dbReference type="ChEBI" id="CHEBI:29105"/>
    </ligand>
</feature>
<feature type="binding site" evidence="1">
    <location>
        <position position="100"/>
    </location>
    <ligand>
        <name>Zn(2+)</name>
        <dbReference type="ChEBI" id="CHEBI:29105"/>
    </ligand>
</feature>
<name>HYPA_METJA</name>
<dbReference type="EMBL" id="L77117">
    <property type="protein sequence ID" value="AAB98198.1"/>
    <property type="molecule type" value="Genomic_DNA"/>
</dbReference>
<dbReference type="PIR" id="G64326">
    <property type="entry name" value="G64326"/>
</dbReference>
<dbReference type="RefSeq" id="WP_010869710.1">
    <property type="nucleotide sequence ID" value="NC_000909.1"/>
</dbReference>
<dbReference type="SMR" id="Q57667"/>
<dbReference type="STRING" id="243232.MJ_0214"/>
<dbReference type="PaxDb" id="243232-MJ_0214"/>
<dbReference type="EnsemblBacteria" id="AAB98198">
    <property type="protein sequence ID" value="AAB98198"/>
    <property type="gene ID" value="MJ_0214"/>
</dbReference>
<dbReference type="GeneID" id="1451064"/>
<dbReference type="KEGG" id="mja:MJ_0214"/>
<dbReference type="eggNOG" id="arCOG04426">
    <property type="taxonomic scope" value="Archaea"/>
</dbReference>
<dbReference type="HOGENOM" id="CLU_126929_2_1_2"/>
<dbReference type="InParanoid" id="Q57667"/>
<dbReference type="OrthoDB" id="36835at2157"/>
<dbReference type="PhylomeDB" id="Q57667"/>
<dbReference type="Proteomes" id="UP000000805">
    <property type="component" value="Chromosome"/>
</dbReference>
<dbReference type="GO" id="GO:0016151">
    <property type="term" value="F:nickel cation binding"/>
    <property type="evidence" value="ECO:0000318"/>
    <property type="project" value="GO_Central"/>
</dbReference>
<dbReference type="GO" id="GO:0008270">
    <property type="term" value="F:zinc ion binding"/>
    <property type="evidence" value="ECO:0000318"/>
    <property type="project" value="GO_Central"/>
</dbReference>
<dbReference type="GO" id="GO:0051604">
    <property type="term" value="P:protein maturation"/>
    <property type="evidence" value="ECO:0000318"/>
    <property type="project" value="GO_Central"/>
</dbReference>
<dbReference type="GO" id="GO:0036211">
    <property type="term" value="P:protein modification process"/>
    <property type="evidence" value="ECO:0007669"/>
    <property type="project" value="UniProtKB-UniRule"/>
</dbReference>
<dbReference type="Gene3D" id="3.30.2320.80">
    <property type="match status" value="1"/>
</dbReference>
<dbReference type="HAMAP" id="MF_00213">
    <property type="entry name" value="HypA_HybF"/>
    <property type="match status" value="1"/>
</dbReference>
<dbReference type="InterPro" id="IPR020538">
    <property type="entry name" value="Hydgase_Ni_incorp_HypA/HybF_CS"/>
</dbReference>
<dbReference type="InterPro" id="IPR000688">
    <property type="entry name" value="HypA/HybF"/>
</dbReference>
<dbReference type="NCBIfam" id="TIGR00100">
    <property type="entry name" value="hypA"/>
    <property type="match status" value="1"/>
</dbReference>
<dbReference type="PANTHER" id="PTHR34535">
    <property type="entry name" value="HYDROGENASE MATURATION FACTOR HYPA"/>
    <property type="match status" value="1"/>
</dbReference>
<dbReference type="PANTHER" id="PTHR34535:SF3">
    <property type="entry name" value="HYDROGENASE MATURATION FACTOR HYPA"/>
    <property type="match status" value="1"/>
</dbReference>
<dbReference type="Pfam" id="PF01155">
    <property type="entry name" value="HypA"/>
    <property type="match status" value="1"/>
</dbReference>
<dbReference type="PIRSF" id="PIRSF004761">
    <property type="entry name" value="Hydrgn_mat_HypA"/>
    <property type="match status" value="1"/>
</dbReference>
<dbReference type="PROSITE" id="PS01249">
    <property type="entry name" value="HYPA"/>
    <property type="match status" value="1"/>
</dbReference>
<accession>Q57667</accession>
<gene>
    <name evidence="1" type="primary">hypA</name>
    <name type="ordered locus">MJ0214</name>
</gene>
<reference key="1">
    <citation type="journal article" date="1996" name="Science">
        <title>Complete genome sequence of the methanogenic archaeon, Methanococcus jannaschii.</title>
        <authorList>
            <person name="Bult C.J."/>
            <person name="White O."/>
            <person name="Olsen G.J."/>
            <person name="Zhou L."/>
            <person name="Fleischmann R.D."/>
            <person name="Sutton G.G."/>
            <person name="Blake J.A."/>
            <person name="FitzGerald L.M."/>
            <person name="Clayton R.A."/>
            <person name="Gocayne J.D."/>
            <person name="Kerlavage A.R."/>
            <person name="Dougherty B.A."/>
            <person name="Tomb J.-F."/>
            <person name="Adams M.D."/>
            <person name="Reich C.I."/>
            <person name="Overbeek R."/>
            <person name="Kirkness E.F."/>
            <person name="Weinstock K.G."/>
            <person name="Merrick J.M."/>
            <person name="Glodek A."/>
            <person name="Scott J.L."/>
            <person name="Geoghagen N.S.M."/>
            <person name="Weidman J.F."/>
            <person name="Fuhrmann J.L."/>
            <person name="Nguyen D."/>
            <person name="Utterback T.R."/>
            <person name="Kelley J.M."/>
            <person name="Peterson J.D."/>
            <person name="Sadow P.W."/>
            <person name="Hanna M.C."/>
            <person name="Cotton M.D."/>
            <person name="Roberts K.M."/>
            <person name="Hurst M.A."/>
            <person name="Kaine B.P."/>
            <person name="Borodovsky M."/>
            <person name="Klenk H.-P."/>
            <person name="Fraser C.M."/>
            <person name="Smith H.O."/>
            <person name="Woese C.R."/>
            <person name="Venter J.C."/>
        </authorList>
    </citation>
    <scope>NUCLEOTIDE SEQUENCE [LARGE SCALE GENOMIC DNA]</scope>
    <source>
        <strain>ATCC 43067 / DSM 2661 / JAL-1 / JCM 10045 / NBRC 100440</strain>
    </source>
</reference>
<organism>
    <name type="scientific">Methanocaldococcus jannaschii (strain ATCC 43067 / DSM 2661 / JAL-1 / JCM 10045 / NBRC 100440)</name>
    <name type="common">Methanococcus jannaschii</name>
    <dbReference type="NCBI Taxonomy" id="243232"/>
    <lineage>
        <taxon>Archaea</taxon>
        <taxon>Methanobacteriati</taxon>
        <taxon>Methanobacteriota</taxon>
        <taxon>Methanomada group</taxon>
        <taxon>Methanococci</taxon>
        <taxon>Methanococcales</taxon>
        <taxon>Methanocaldococcaceae</taxon>
        <taxon>Methanocaldococcus</taxon>
    </lineage>
</organism>
<proteinExistence type="inferred from homology"/>
<protein>
    <recommendedName>
        <fullName evidence="1">Hydrogenase maturation factor HypA</fullName>
    </recommendedName>
</protein>
<evidence type="ECO:0000255" key="1">
    <source>
        <dbReference type="HAMAP-Rule" id="MF_00213"/>
    </source>
</evidence>
<evidence type="ECO:0000305" key="2"/>